<feature type="chain" id="PRO_1000049055" description="Large ribosomal subunit protein bL20">
    <location>
        <begin position="1"/>
        <end position="117"/>
    </location>
</feature>
<evidence type="ECO:0000255" key="1">
    <source>
        <dbReference type="HAMAP-Rule" id="MF_00382"/>
    </source>
</evidence>
<evidence type="ECO:0000305" key="2"/>
<comment type="function">
    <text evidence="1">Binds directly to 23S ribosomal RNA and is necessary for the in vitro assembly process of the 50S ribosomal subunit. It is not involved in the protein synthesizing functions of that subunit.</text>
</comment>
<comment type="similarity">
    <text evidence="1">Belongs to the bacterial ribosomal protein bL20 family.</text>
</comment>
<gene>
    <name evidence="1" type="primary">rplT</name>
    <name type="ordered locus">A1I_02575</name>
</gene>
<accession>A8GVL2</accession>
<keyword id="KW-0687">Ribonucleoprotein</keyword>
<keyword id="KW-0689">Ribosomal protein</keyword>
<keyword id="KW-0694">RNA-binding</keyword>
<keyword id="KW-0699">rRNA-binding</keyword>
<organism>
    <name type="scientific">Rickettsia bellii (strain OSU 85-389)</name>
    <dbReference type="NCBI Taxonomy" id="391896"/>
    <lineage>
        <taxon>Bacteria</taxon>
        <taxon>Pseudomonadati</taxon>
        <taxon>Pseudomonadota</taxon>
        <taxon>Alphaproteobacteria</taxon>
        <taxon>Rickettsiales</taxon>
        <taxon>Rickettsiaceae</taxon>
        <taxon>Rickettsieae</taxon>
        <taxon>Rickettsia</taxon>
        <taxon>belli group</taxon>
    </lineage>
</organism>
<name>RL20_RICB8</name>
<protein>
    <recommendedName>
        <fullName evidence="1">Large ribosomal subunit protein bL20</fullName>
    </recommendedName>
    <alternativeName>
        <fullName evidence="2">50S ribosomal protein L20</fullName>
    </alternativeName>
</protein>
<sequence>MTRAKSGKISKNRHKKILKLAKGYRGRASTCFRVAIEKVEKGLQYAYRDRRNRKRDFRGLWIQRINAAVREHGLVYSQFMGALKKAEIDIDRKVLAELAVNNNEEFASIVEQAKAHI</sequence>
<proteinExistence type="inferred from homology"/>
<dbReference type="EMBL" id="CP000849">
    <property type="protein sequence ID" value="ABV78889.1"/>
    <property type="molecule type" value="Genomic_DNA"/>
</dbReference>
<dbReference type="RefSeq" id="WP_011477531.1">
    <property type="nucleotide sequence ID" value="NC_009883.1"/>
</dbReference>
<dbReference type="SMR" id="A8GVL2"/>
<dbReference type="KEGG" id="rbo:A1I_02575"/>
<dbReference type="HOGENOM" id="CLU_123265_0_1_5"/>
<dbReference type="GO" id="GO:1990904">
    <property type="term" value="C:ribonucleoprotein complex"/>
    <property type="evidence" value="ECO:0007669"/>
    <property type="project" value="UniProtKB-KW"/>
</dbReference>
<dbReference type="GO" id="GO:0005840">
    <property type="term" value="C:ribosome"/>
    <property type="evidence" value="ECO:0007669"/>
    <property type="project" value="UniProtKB-KW"/>
</dbReference>
<dbReference type="GO" id="GO:0019843">
    <property type="term" value="F:rRNA binding"/>
    <property type="evidence" value="ECO:0007669"/>
    <property type="project" value="UniProtKB-UniRule"/>
</dbReference>
<dbReference type="GO" id="GO:0003735">
    <property type="term" value="F:structural constituent of ribosome"/>
    <property type="evidence" value="ECO:0007669"/>
    <property type="project" value="InterPro"/>
</dbReference>
<dbReference type="GO" id="GO:0000027">
    <property type="term" value="P:ribosomal large subunit assembly"/>
    <property type="evidence" value="ECO:0007669"/>
    <property type="project" value="UniProtKB-UniRule"/>
</dbReference>
<dbReference type="GO" id="GO:0006412">
    <property type="term" value="P:translation"/>
    <property type="evidence" value="ECO:0007669"/>
    <property type="project" value="InterPro"/>
</dbReference>
<dbReference type="CDD" id="cd07026">
    <property type="entry name" value="Ribosomal_L20"/>
    <property type="match status" value="1"/>
</dbReference>
<dbReference type="FunFam" id="1.10.1900.20:FF:000001">
    <property type="entry name" value="50S ribosomal protein L20"/>
    <property type="match status" value="1"/>
</dbReference>
<dbReference type="Gene3D" id="6.10.160.10">
    <property type="match status" value="1"/>
</dbReference>
<dbReference type="Gene3D" id="1.10.1900.20">
    <property type="entry name" value="Ribosomal protein L20"/>
    <property type="match status" value="1"/>
</dbReference>
<dbReference type="HAMAP" id="MF_00382">
    <property type="entry name" value="Ribosomal_bL20"/>
    <property type="match status" value="1"/>
</dbReference>
<dbReference type="InterPro" id="IPR005813">
    <property type="entry name" value="Ribosomal_bL20"/>
</dbReference>
<dbReference type="InterPro" id="IPR049946">
    <property type="entry name" value="RIBOSOMAL_L20_CS"/>
</dbReference>
<dbReference type="InterPro" id="IPR035566">
    <property type="entry name" value="Ribosomal_protein_bL20_C"/>
</dbReference>
<dbReference type="NCBIfam" id="TIGR01032">
    <property type="entry name" value="rplT_bact"/>
    <property type="match status" value="1"/>
</dbReference>
<dbReference type="PANTHER" id="PTHR10986">
    <property type="entry name" value="39S RIBOSOMAL PROTEIN L20"/>
    <property type="match status" value="1"/>
</dbReference>
<dbReference type="Pfam" id="PF00453">
    <property type="entry name" value="Ribosomal_L20"/>
    <property type="match status" value="1"/>
</dbReference>
<dbReference type="PRINTS" id="PR00062">
    <property type="entry name" value="RIBOSOMALL20"/>
</dbReference>
<dbReference type="SUPFAM" id="SSF74731">
    <property type="entry name" value="Ribosomal protein L20"/>
    <property type="match status" value="1"/>
</dbReference>
<dbReference type="PROSITE" id="PS00937">
    <property type="entry name" value="RIBOSOMAL_L20"/>
    <property type="match status" value="1"/>
</dbReference>
<reference key="1">
    <citation type="submission" date="2007-09" db="EMBL/GenBank/DDBJ databases">
        <title>Complete genome sequencing of Rickettsia bellii.</title>
        <authorList>
            <person name="Madan A."/>
            <person name="Lee H."/>
            <person name="Madan A."/>
            <person name="Yoon J.-G."/>
            <person name="Ryu G.-Y."/>
            <person name="Dasch G."/>
            <person name="Ereemeva M."/>
        </authorList>
    </citation>
    <scope>NUCLEOTIDE SEQUENCE [LARGE SCALE GENOMIC DNA]</scope>
    <source>
        <strain>OSU 85-389</strain>
    </source>
</reference>